<gene>
    <name type="ordered locus">BMA1246</name>
</gene>
<keyword id="KW-1185">Reference proteome</keyword>
<sequence>MDIALDLQSIAVQEKTLVFPQFDAARAWALGSQLREFALARGHAVAIDVRTFGQPLFFALVDGATPDNVDWARRKGNVVAHFRRSSYAIGLRLQQAGATLADKHGLPAAEYASHGGAFPIAVAGAGVIGSVTVSGLPQRGDHELVVEALCAQLGHAYATLALTGN</sequence>
<feature type="chain" id="PRO_1000046742" description="UPF0303 protein BMA1246">
    <location>
        <begin position="1"/>
        <end position="165"/>
    </location>
</feature>
<evidence type="ECO:0000255" key="1">
    <source>
        <dbReference type="HAMAP-Rule" id="MF_00761"/>
    </source>
</evidence>
<accession>Q62K50</accession>
<name>Y1246_BURMA</name>
<protein>
    <recommendedName>
        <fullName evidence="1">UPF0303 protein BMA1246</fullName>
    </recommendedName>
</protein>
<organism>
    <name type="scientific">Burkholderia mallei (strain ATCC 23344)</name>
    <dbReference type="NCBI Taxonomy" id="243160"/>
    <lineage>
        <taxon>Bacteria</taxon>
        <taxon>Pseudomonadati</taxon>
        <taxon>Pseudomonadota</taxon>
        <taxon>Betaproteobacteria</taxon>
        <taxon>Burkholderiales</taxon>
        <taxon>Burkholderiaceae</taxon>
        <taxon>Burkholderia</taxon>
        <taxon>pseudomallei group</taxon>
    </lineage>
</organism>
<comment type="similarity">
    <text evidence="1">Belongs to the UPF0303 family.</text>
</comment>
<dbReference type="EMBL" id="CP000010">
    <property type="protein sequence ID" value="AAU47468.1"/>
    <property type="molecule type" value="Genomic_DNA"/>
</dbReference>
<dbReference type="RefSeq" id="WP_004199466.1">
    <property type="nucleotide sequence ID" value="NC_006348.1"/>
</dbReference>
<dbReference type="RefSeq" id="YP_102919.1">
    <property type="nucleotide sequence ID" value="NC_006348.1"/>
</dbReference>
<dbReference type="SMR" id="Q62K50"/>
<dbReference type="KEGG" id="bma:BMA1246"/>
<dbReference type="PATRIC" id="fig|243160.12.peg.1280"/>
<dbReference type="eggNOG" id="COG4702">
    <property type="taxonomic scope" value="Bacteria"/>
</dbReference>
<dbReference type="HOGENOM" id="CLU_101036_2_2_4"/>
<dbReference type="Proteomes" id="UP000006693">
    <property type="component" value="Chromosome 1"/>
</dbReference>
<dbReference type="Gene3D" id="3.30.450.150">
    <property type="entry name" value="Haem-degrading domain"/>
    <property type="match status" value="1"/>
</dbReference>
<dbReference type="HAMAP" id="MF_00761">
    <property type="entry name" value="UPF0303"/>
    <property type="match status" value="1"/>
</dbReference>
<dbReference type="InterPro" id="IPR005624">
    <property type="entry name" value="PduO/GlcC-like"/>
</dbReference>
<dbReference type="InterPro" id="IPR038084">
    <property type="entry name" value="PduO/GlcC-like_sf"/>
</dbReference>
<dbReference type="InterPro" id="IPR010371">
    <property type="entry name" value="YBR137W-like"/>
</dbReference>
<dbReference type="NCBIfam" id="NF002695">
    <property type="entry name" value="PRK02487.1-4"/>
    <property type="match status" value="1"/>
</dbReference>
<dbReference type="NCBIfam" id="NF002696">
    <property type="entry name" value="PRK02487.1-5"/>
    <property type="match status" value="1"/>
</dbReference>
<dbReference type="PANTHER" id="PTHR28255">
    <property type="match status" value="1"/>
</dbReference>
<dbReference type="PANTHER" id="PTHR28255:SF1">
    <property type="entry name" value="UPF0303 PROTEIN YBR137W"/>
    <property type="match status" value="1"/>
</dbReference>
<dbReference type="Pfam" id="PF03928">
    <property type="entry name" value="HbpS-like"/>
    <property type="match status" value="1"/>
</dbReference>
<dbReference type="PIRSF" id="PIRSF008757">
    <property type="entry name" value="UCP008757"/>
    <property type="match status" value="1"/>
</dbReference>
<dbReference type="SUPFAM" id="SSF143744">
    <property type="entry name" value="GlcG-like"/>
    <property type="match status" value="1"/>
</dbReference>
<reference key="1">
    <citation type="journal article" date="2004" name="Proc. Natl. Acad. Sci. U.S.A.">
        <title>Structural flexibility in the Burkholderia mallei genome.</title>
        <authorList>
            <person name="Nierman W.C."/>
            <person name="DeShazer D."/>
            <person name="Kim H.S."/>
            <person name="Tettelin H."/>
            <person name="Nelson K.E."/>
            <person name="Feldblyum T.V."/>
            <person name="Ulrich R.L."/>
            <person name="Ronning C.M."/>
            <person name="Brinkac L.M."/>
            <person name="Daugherty S.C."/>
            <person name="Davidsen T.D."/>
            <person name="DeBoy R.T."/>
            <person name="Dimitrov G."/>
            <person name="Dodson R.J."/>
            <person name="Durkin A.S."/>
            <person name="Gwinn M.L."/>
            <person name="Haft D.H."/>
            <person name="Khouri H.M."/>
            <person name="Kolonay J.F."/>
            <person name="Madupu R."/>
            <person name="Mohammoud Y."/>
            <person name="Nelson W.C."/>
            <person name="Radune D."/>
            <person name="Romero C.M."/>
            <person name="Sarria S."/>
            <person name="Selengut J."/>
            <person name="Shamblin C."/>
            <person name="Sullivan S.A."/>
            <person name="White O."/>
            <person name="Yu Y."/>
            <person name="Zafar N."/>
            <person name="Zhou L."/>
            <person name="Fraser C.M."/>
        </authorList>
    </citation>
    <scope>NUCLEOTIDE SEQUENCE [LARGE SCALE GENOMIC DNA]</scope>
    <source>
        <strain>ATCC 23344</strain>
    </source>
</reference>
<proteinExistence type="inferred from homology"/>